<proteinExistence type="inferred from homology"/>
<accession>P0CK76</accession>
<feature type="chain" id="PRO_0000419359" description="Protein PA-X">
    <location>
        <begin position="1"/>
        <end position="252"/>
    </location>
</feature>
<feature type="active site" evidence="2">
    <location>
        <position position="80"/>
    </location>
</feature>
<feature type="active site" evidence="2">
    <location>
        <position position="108"/>
    </location>
</feature>
<feature type="site" description="Important for efficient shutoff activity and nuclear localization" evidence="4">
    <location>
        <position position="195"/>
    </location>
</feature>
<feature type="site" description="Important for efficient shutoff activity and nuclear localization" evidence="4">
    <location>
        <position position="198"/>
    </location>
</feature>
<feature type="site" description="Important for efficient shutoff activity and nuclear localization" evidence="4">
    <location>
        <position position="199"/>
    </location>
</feature>
<feature type="site" description="Important for efficient shutoff activity" evidence="3">
    <location>
        <position position="202"/>
    </location>
</feature>
<feature type="site" description="Important for efficient shutoff activity" evidence="3">
    <location>
        <position position="203"/>
    </location>
</feature>
<feature type="site" description="Important for efficient shutoff activity" evidence="3">
    <location>
        <position position="206"/>
    </location>
</feature>
<evidence type="ECO:0000250" key="1">
    <source>
        <dbReference type="UniProtKB" id="P0CK64"/>
    </source>
</evidence>
<evidence type="ECO:0000250" key="2">
    <source>
        <dbReference type="UniProtKB" id="P0CK68"/>
    </source>
</evidence>
<evidence type="ECO:0000250" key="3">
    <source>
        <dbReference type="UniProtKB" id="P0DJW8"/>
    </source>
</evidence>
<evidence type="ECO:0000250" key="4">
    <source>
        <dbReference type="UniProtKB" id="P0DXO5"/>
    </source>
</evidence>
<evidence type="ECO:0000305" key="5"/>
<organism>
    <name type="scientific">Influenza A virus (strain A/Chicken/Scotland/1959 H5N1)</name>
    <dbReference type="NCBI Taxonomy" id="402527"/>
    <lineage>
        <taxon>Viruses</taxon>
        <taxon>Riboviria</taxon>
        <taxon>Orthornavirae</taxon>
        <taxon>Negarnaviricota</taxon>
        <taxon>Polyploviricotina</taxon>
        <taxon>Insthoviricetes</taxon>
        <taxon>Articulavirales</taxon>
        <taxon>Orthomyxoviridae</taxon>
        <taxon>Alphainfluenzavirus</taxon>
        <taxon>Alphainfluenzavirus influenzae</taxon>
        <taxon>Influenza A virus</taxon>
    </lineage>
</organism>
<comment type="function">
    <text evidence="1 4">Plays a major role in the shutoff of the host protein expression by cleaving mRNAs probably via an endonuclease activity. This host shutoff allows the virus to escape from the host antiviral response (By similarity). Hijacks host RNA splicing machinery to selectively target host RNAs containing introns for destruction. This may explain the preferential degradation of RNAs that have undergone co- or post-transcriptional processing (By similarity).</text>
</comment>
<comment type="subcellular location">
    <subcellularLocation>
        <location evidence="4">Host cytoplasm</location>
    </subcellularLocation>
    <subcellularLocation>
        <location evidence="4">Host nucleus</location>
    </subcellularLocation>
</comment>
<comment type="alternative products">
    <event type="ribosomal frameshifting"/>
    <isoform>
        <id>P0CK76-1</id>
        <name>PA-X</name>
        <sequence type="displayed"/>
    </isoform>
    <isoform>
        <id>Q0A2G9-1</id>
        <name>PA</name>
        <sequence type="external"/>
    </isoform>
</comment>
<comment type="domain">
    <text evidence="1 4">The probable endonuclease active site in the N-terminus and the basic amino acid cluster in the C-terminus are important for the shutoff activity. The C-terminus acts as a nuclear localization signal (By similarity). The C-terminus is recruited to host protein complexes involved in nuclear Pol II RNA processing (By similarity).</text>
</comment>
<comment type="similarity">
    <text evidence="5">Belongs to the influenza viruses PA-X family.</text>
</comment>
<organismHost>
    <name type="scientific">Aves</name>
    <dbReference type="NCBI Taxonomy" id="8782"/>
</organismHost>
<organismHost>
    <name type="scientific">Felis catus</name>
    <name type="common">Cat</name>
    <name type="synonym">Felis silvestris catus</name>
    <dbReference type="NCBI Taxonomy" id="9685"/>
</organismHost>
<organismHost>
    <name type="scientific">Homo sapiens</name>
    <name type="common">Human</name>
    <dbReference type="NCBI Taxonomy" id="9606"/>
</organismHost>
<organismHost>
    <name type="scientific">Panthera pardus</name>
    <name type="common">Leopard</name>
    <name type="synonym">Felis pardus</name>
    <dbReference type="NCBI Taxonomy" id="9691"/>
</organismHost>
<organismHost>
    <name type="scientific">Panthera tigris</name>
    <name type="common">Tiger</name>
    <dbReference type="NCBI Taxonomy" id="9694"/>
</organismHost>
<organismHost>
    <name type="scientific">Sus scrofa</name>
    <name type="common">Pig</name>
    <dbReference type="NCBI Taxonomy" id="9823"/>
</organismHost>
<keyword id="KW-1132">Decay of host mRNAs by virus</keyword>
<keyword id="KW-1262">Eukaryotic host gene expression shutoff by virus</keyword>
<keyword id="KW-1035">Host cytoplasm</keyword>
<keyword id="KW-1190">Host gene expression shutoff by virus</keyword>
<keyword id="KW-1192">Host mRNA suppression by virus</keyword>
<keyword id="KW-1048">Host nucleus</keyword>
<keyword id="KW-0945">Host-virus interaction</keyword>
<keyword id="KW-0688">Ribosomal frameshifting</keyword>
<sequence>MEDFVRQCFNPMIVELAEKAMKEYGEDPKIETNKFAAICTHLEVCFMYSDFHFIDERGESIIVESGDPNALLKHRFEIIEGRDRTMAWTVVNSICNTTGVEKPKFLPDLYDYRENRFIEIGVTRREVHIYYLEKANKIKSEKTHIHIFSFTGEEMATKADYTLDEESRARIKTRLFTIRQEMASRGLWDSFVSPREAKRQLKKDLKSQEPCVGLPIKVSHRTSPALKTLEPMWMDSNRTAALRASFLKCPKK</sequence>
<name>PAX_I59A0</name>
<reference key="1">
    <citation type="journal article" date="2006" name="Science">
        <title>Large-scale sequence analysis of avian influenza isolates.</title>
        <authorList>
            <person name="Obenauer J.C."/>
            <person name="Denson J."/>
            <person name="Mehta P.K."/>
            <person name="Su X."/>
            <person name="Mukatira S."/>
            <person name="Finkelstein D.B."/>
            <person name="Xu X."/>
            <person name="Wang J."/>
            <person name="Ma J."/>
            <person name="Fan Y."/>
            <person name="Rakestraw K.M."/>
            <person name="Webster R.G."/>
            <person name="Hoffmann E."/>
            <person name="Krauss S."/>
            <person name="Zheng J."/>
            <person name="Zhang Z."/>
            <person name="Naeve C.W."/>
        </authorList>
    </citation>
    <scope>NUCLEOTIDE SEQUENCE [GENOMIC RNA]</scope>
</reference>
<gene>
    <name type="primary">PA</name>
</gene>
<protein>
    <recommendedName>
        <fullName>Protein PA-X</fullName>
    </recommendedName>
</protein>
<dbReference type="EMBL" id="CY015086">
    <property type="status" value="NOT_ANNOTATED_CDS"/>
    <property type="molecule type" value="Genomic_RNA"/>
</dbReference>
<dbReference type="SMR" id="P0CK76"/>
<dbReference type="Proteomes" id="UP000169634">
    <property type="component" value="Genome"/>
</dbReference>
<dbReference type="GO" id="GO:0003723">
    <property type="term" value="F:RNA binding"/>
    <property type="evidence" value="ECO:0007669"/>
    <property type="project" value="InterPro"/>
</dbReference>
<dbReference type="GO" id="GO:0039694">
    <property type="term" value="P:viral RNA genome replication"/>
    <property type="evidence" value="ECO:0007669"/>
    <property type="project" value="InterPro"/>
</dbReference>
<dbReference type="GO" id="GO:0075523">
    <property type="term" value="P:viral translational frameshifting"/>
    <property type="evidence" value="ECO:0007669"/>
    <property type="project" value="UniProtKB-KW"/>
</dbReference>
<dbReference type="FunFam" id="3.40.91.90:FF:000001">
    <property type="entry name" value="Polymerase acidic protein"/>
    <property type="match status" value="1"/>
</dbReference>
<dbReference type="Gene3D" id="3.40.91.90">
    <property type="entry name" value="Influenza RNA-dependent RNA polymerase subunit PA, endonuclease domain"/>
    <property type="match status" value="1"/>
</dbReference>
<dbReference type="InterPro" id="IPR001009">
    <property type="entry name" value="PA/PA-X"/>
</dbReference>
<dbReference type="InterPro" id="IPR038372">
    <property type="entry name" value="PA/PA-X_sf"/>
</dbReference>
<dbReference type="Pfam" id="PF00603">
    <property type="entry name" value="Flu_PA"/>
    <property type="match status" value="1"/>
</dbReference>